<protein>
    <recommendedName>
        <fullName evidence="1">Elongation factor 4</fullName>
        <shortName evidence="1">EF-4</shortName>
        <ecNumber evidence="1">3.6.5.n1</ecNumber>
    </recommendedName>
    <alternativeName>
        <fullName evidence="1">Ribosomal back-translocase LepA</fullName>
    </alternativeName>
</protein>
<feature type="chain" id="PRO_0000176355" description="Elongation factor 4">
    <location>
        <begin position="1"/>
        <end position="610"/>
    </location>
</feature>
<feature type="domain" description="tr-type G">
    <location>
        <begin position="11"/>
        <end position="193"/>
    </location>
</feature>
<feature type="binding site" evidence="1">
    <location>
        <begin position="23"/>
        <end position="28"/>
    </location>
    <ligand>
        <name>GTP</name>
        <dbReference type="ChEBI" id="CHEBI:37565"/>
    </ligand>
</feature>
<feature type="binding site" evidence="1">
    <location>
        <begin position="140"/>
        <end position="143"/>
    </location>
    <ligand>
        <name>GTP</name>
        <dbReference type="ChEBI" id="CHEBI:37565"/>
    </ligand>
</feature>
<evidence type="ECO:0000255" key="1">
    <source>
        <dbReference type="HAMAP-Rule" id="MF_00071"/>
    </source>
</evidence>
<organism>
    <name type="scientific">Streptococcus pyogenes serotype M1</name>
    <dbReference type="NCBI Taxonomy" id="301447"/>
    <lineage>
        <taxon>Bacteria</taxon>
        <taxon>Bacillati</taxon>
        <taxon>Bacillota</taxon>
        <taxon>Bacilli</taxon>
        <taxon>Lactobacillales</taxon>
        <taxon>Streptococcaceae</taxon>
        <taxon>Streptococcus</taxon>
    </lineage>
</organism>
<name>LEPA_STRP1</name>
<comment type="function">
    <text evidence="1">Required for accurate and efficient protein synthesis under certain stress conditions. May act as a fidelity factor of the translation reaction, by catalyzing a one-codon backward translocation of tRNAs on improperly translocated ribosomes. Back-translocation proceeds from a post-translocation (POST) complex to a pre-translocation (PRE) complex, thus giving elongation factor G a second chance to translocate the tRNAs correctly. Binds to ribosomes in a GTP-dependent manner.</text>
</comment>
<comment type="catalytic activity">
    <reaction evidence="1">
        <text>GTP + H2O = GDP + phosphate + H(+)</text>
        <dbReference type="Rhea" id="RHEA:19669"/>
        <dbReference type="ChEBI" id="CHEBI:15377"/>
        <dbReference type="ChEBI" id="CHEBI:15378"/>
        <dbReference type="ChEBI" id="CHEBI:37565"/>
        <dbReference type="ChEBI" id="CHEBI:43474"/>
        <dbReference type="ChEBI" id="CHEBI:58189"/>
        <dbReference type="EC" id="3.6.5.n1"/>
    </reaction>
</comment>
<comment type="subcellular location">
    <subcellularLocation>
        <location evidence="1">Cell membrane</location>
        <topology evidence="1">Peripheral membrane protein</topology>
        <orientation evidence="1">Cytoplasmic side</orientation>
    </subcellularLocation>
</comment>
<comment type="similarity">
    <text evidence="1">Belongs to the TRAFAC class translation factor GTPase superfamily. Classic translation factor GTPase family. LepA subfamily.</text>
</comment>
<keyword id="KW-1003">Cell membrane</keyword>
<keyword id="KW-0342">GTP-binding</keyword>
<keyword id="KW-0378">Hydrolase</keyword>
<keyword id="KW-0472">Membrane</keyword>
<keyword id="KW-0547">Nucleotide-binding</keyword>
<keyword id="KW-0648">Protein biosynthesis</keyword>
<keyword id="KW-1185">Reference proteome</keyword>
<gene>
    <name evidence="1" type="primary">lepA</name>
    <name type="ordered locus">SPy_1053</name>
    <name type="ordered locus">M5005_Spy0776</name>
</gene>
<sequence>MNSQDLKKRQEKIRNFSIIAHIDHGKSTLADRILEKTETVSSREMQAQLLDSMDLERERGITIKLNAIELNYTAKDGETYIFHLIDTPGHVDFTYEVSRSLAACEGAILVVDAAQGIEAQTLANVYLALDNDLEILPVINKIDLPAADPERVRHEVEDVIGLDASEAVLASAKAGIGIEEILEQIVEKVPAPTGDVDAPLQALIFDSVYDAYRGVILQVRIVNGIVKPGDKIQMMSNGKTFDVTEVGIFTPKAVGRDFLATGDVGYVAASIKTVADTRVGDTVTLANNPAKEALHGYKQMNPMVFAGIYPIESNKYNDLREALEKLQLNDASLQFEPETSQALGFGFRCGFLGLLHMDVIQERLEREFNIDLIMTAPSVVYHVHTTDEDMIEVSNPSEFPDPTRVAFIEEPYVKAQIMVPQEFVGAVMELSQRKRGDFVTMDYIDDNRVNVIYQIPLAEIVFDFFDKLKSSTRGYASFDYDMSEYRRSQLVKMDILLNGDKVDALSFIVHKEFAYERGKIIVEKLKKIIPRQQFEVPIQAAIGQKIVARSDIKALRKNVLAKCYGGDVSRKRKLLEKQKAGKKRMKAIGSVEVPQEAFLSVLSMDDDTKK</sequence>
<accession>Q99ZV8</accession>
<accession>Q48Z24</accession>
<reference key="1">
    <citation type="journal article" date="2001" name="Proc. Natl. Acad. Sci. U.S.A.">
        <title>Complete genome sequence of an M1 strain of Streptococcus pyogenes.</title>
        <authorList>
            <person name="Ferretti J.J."/>
            <person name="McShan W.M."/>
            <person name="Ajdic D.J."/>
            <person name="Savic D.J."/>
            <person name="Savic G."/>
            <person name="Lyon K."/>
            <person name="Primeaux C."/>
            <person name="Sezate S."/>
            <person name="Suvorov A.N."/>
            <person name="Kenton S."/>
            <person name="Lai H.S."/>
            <person name="Lin S.P."/>
            <person name="Qian Y."/>
            <person name="Jia H.G."/>
            <person name="Najar F.Z."/>
            <person name="Ren Q."/>
            <person name="Zhu H."/>
            <person name="Song L."/>
            <person name="White J."/>
            <person name="Yuan X."/>
            <person name="Clifton S.W."/>
            <person name="Roe B.A."/>
            <person name="McLaughlin R.E."/>
        </authorList>
    </citation>
    <scope>NUCLEOTIDE SEQUENCE [LARGE SCALE GENOMIC DNA]</scope>
    <source>
        <strain>ATCC 700294 / SF370 / Serotype M1</strain>
    </source>
</reference>
<reference key="2">
    <citation type="journal article" date="2005" name="J. Infect. Dis.">
        <title>Evolutionary origin and emergence of a highly successful clone of serotype M1 group A Streptococcus involved multiple horizontal gene transfer events.</title>
        <authorList>
            <person name="Sumby P."/>
            <person name="Porcella S.F."/>
            <person name="Madrigal A.G."/>
            <person name="Barbian K.D."/>
            <person name="Virtaneva K."/>
            <person name="Ricklefs S.M."/>
            <person name="Sturdevant D.E."/>
            <person name="Graham M.R."/>
            <person name="Vuopio-Varkila J."/>
            <person name="Hoe N.P."/>
            <person name="Musser J.M."/>
        </authorList>
    </citation>
    <scope>NUCLEOTIDE SEQUENCE [LARGE SCALE GENOMIC DNA]</scope>
    <source>
        <strain>ATCC BAA-947 / MGAS5005 / Serotype M1</strain>
    </source>
</reference>
<proteinExistence type="inferred from homology"/>
<dbReference type="EC" id="3.6.5.n1" evidence="1"/>
<dbReference type="EMBL" id="AE004092">
    <property type="protein sequence ID" value="AAK33940.1"/>
    <property type="molecule type" value="Genomic_DNA"/>
</dbReference>
<dbReference type="EMBL" id="CP000017">
    <property type="protein sequence ID" value="AAZ51394.1"/>
    <property type="molecule type" value="Genomic_DNA"/>
</dbReference>
<dbReference type="RefSeq" id="NP_269219.1">
    <property type="nucleotide sequence ID" value="NC_002737.2"/>
</dbReference>
<dbReference type="SMR" id="Q99ZV8"/>
<dbReference type="PaxDb" id="1314-HKU360_00843"/>
<dbReference type="KEGG" id="spy:SPy_1053"/>
<dbReference type="KEGG" id="spz:M5005_Spy0776"/>
<dbReference type="PATRIC" id="fig|160490.10.peg.908"/>
<dbReference type="HOGENOM" id="CLU_009995_3_3_9"/>
<dbReference type="OMA" id="QVKCDEN"/>
<dbReference type="Proteomes" id="UP000000750">
    <property type="component" value="Chromosome"/>
</dbReference>
<dbReference type="GO" id="GO:0005886">
    <property type="term" value="C:plasma membrane"/>
    <property type="evidence" value="ECO:0007669"/>
    <property type="project" value="UniProtKB-SubCell"/>
</dbReference>
<dbReference type="GO" id="GO:0005525">
    <property type="term" value="F:GTP binding"/>
    <property type="evidence" value="ECO:0007669"/>
    <property type="project" value="UniProtKB-UniRule"/>
</dbReference>
<dbReference type="GO" id="GO:0003924">
    <property type="term" value="F:GTPase activity"/>
    <property type="evidence" value="ECO:0007669"/>
    <property type="project" value="UniProtKB-UniRule"/>
</dbReference>
<dbReference type="GO" id="GO:0043022">
    <property type="term" value="F:ribosome binding"/>
    <property type="evidence" value="ECO:0007669"/>
    <property type="project" value="UniProtKB-UniRule"/>
</dbReference>
<dbReference type="GO" id="GO:0003746">
    <property type="term" value="F:translation elongation factor activity"/>
    <property type="evidence" value="ECO:0007669"/>
    <property type="project" value="UniProtKB-UniRule"/>
</dbReference>
<dbReference type="GO" id="GO:0045727">
    <property type="term" value="P:positive regulation of translation"/>
    <property type="evidence" value="ECO:0007669"/>
    <property type="project" value="UniProtKB-UniRule"/>
</dbReference>
<dbReference type="CDD" id="cd03699">
    <property type="entry name" value="EF4_II"/>
    <property type="match status" value="1"/>
</dbReference>
<dbReference type="CDD" id="cd16260">
    <property type="entry name" value="EF4_III"/>
    <property type="match status" value="1"/>
</dbReference>
<dbReference type="CDD" id="cd01890">
    <property type="entry name" value="LepA"/>
    <property type="match status" value="1"/>
</dbReference>
<dbReference type="CDD" id="cd03709">
    <property type="entry name" value="lepA_C"/>
    <property type="match status" value="1"/>
</dbReference>
<dbReference type="FunFam" id="3.40.50.300:FF:000078">
    <property type="entry name" value="Elongation factor 4"/>
    <property type="match status" value="1"/>
</dbReference>
<dbReference type="FunFam" id="2.40.30.10:FF:000015">
    <property type="entry name" value="Translation factor GUF1, mitochondrial"/>
    <property type="match status" value="1"/>
</dbReference>
<dbReference type="FunFam" id="3.30.70.240:FF:000007">
    <property type="entry name" value="Translation factor GUF1, mitochondrial"/>
    <property type="match status" value="1"/>
</dbReference>
<dbReference type="FunFam" id="3.30.70.2570:FF:000001">
    <property type="entry name" value="Translation factor GUF1, mitochondrial"/>
    <property type="match status" value="1"/>
</dbReference>
<dbReference type="FunFam" id="3.30.70.870:FF:000004">
    <property type="entry name" value="Translation factor GUF1, mitochondrial"/>
    <property type="match status" value="1"/>
</dbReference>
<dbReference type="Gene3D" id="3.30.70.240">
    <property type="match status" value="1"/>
</dbReference>
<dbReference type="Gene3D" id="3.30.70.2570">
    <property type="entry name" value="Elongation factor 4, C-terminal domain"/>
    <property type="match status" value="1"/>
</dbReference>
<dbReference type="Gene3D" id="3.30.70.870">
    <property type="entry name" value="Elongation Factor G (Translational Gtpase), domain 3"/>
    <property type="match status" value="1"/>
</dbReference>
<dbReference type="Gene3D" id="3.40.50.300">
    <property type="entry name" value="P-loop containing nucleotide triphosphate hydrolases"/>
    <property type="match status" value="1"/>
</dbReference>
<dbReference type="Gene3D" id="2.40.30.10">
    <property type="entry name" value="Translation factors"/>
    <property type="match status" value="1"/>
</dbReference>
<dbReference type="HAMAP" id="MF_00071">
    <property type="entry name" value="LepA"/>
    <property type="match status" value="1"/>
</dbReference>
<dbReference type="InterPro" id="IPR006297">
    <property type="entry name" value="EF-4"/>
</dbReference>
<dbReference type="InterPro" id="IPR041095">
    <property type="entry name" value="EFG_II"/>
</dbReference>
<dbReference type="InterPro" id="IPR035647">
    <property type="entry name" value="EFG_III/V"/>
</dbReference>
<dbReference type="InterPro" id="IPR000640">
    <property type="entry name" value="EFG_V-like"/>
</dbReference>
<dbReference type="InterPro" id="IPR004161">
    <property type="entry name" value="EFTu-like_2"/>
</dbReference>
<dbReference type="InterPro" id="IPR031157">
    <property type="entry name" value="G_TR_CS"/>
</dbReference>
<dbReference type="InterPro" id="IPR038363">
    <property type="entry name" value="LepA_C_sf"/>
</dbReference>
<dbReference type="InterPro" id="IPR013842">
    <property type="entry name" value="LepA_CTD"/>
</dbReference>
<dbReference type="InterPro" id="IPR035654">
    <property type="entry name" value="LepA_IV"/>
</dbReference>
<dbReference type="InterPro" id="IPR027417">
    <property type="entry name" value="P-loop_NTPase"/>
</dbReference>
<dbReference type="InterPro" id="IPR005225">
    <property type="entry name" value="Small_GTP-bd"/>
</dbReference>
<dbReference type="InterPro" id="IPR000795">
    <property type="entry name" value="T_Tr_GTP-bd_dom"/>
</dbReference>
<dbReference type="InterPro" id="IPR009000">
    <property type="entry name" value="Transl_B-barrel_sf"/>
</dbReference>
<dbReference type="NCBIfam" id="TIGR01393">
    <property type="entry name" value="lepA"/>
    <property type="match status" value="1"/>
</dbReference>
<dbReference type="NCBIfam" id="TIGR00231">
    <property type="entry name" value="small_GTP"/>
    <property type="match status" value="1"/>
</dbReference>
<dbReference type="PANTHER" id="PTHR43512:SF4">
    <property type="entry name" value="TRANSLATION FACTOR GUF1 HOMOLOG, CHLOROPLASTIC"/>
    <property type="match status" value="1"/>
</dbReference>
<dbReference type="PANTHER" id="PTHR43512">
    <property type="entry name" value="TRANSLATION FACTOR GUF1-RELATED"/>
    <property type="match status" value="1"/>
</dbReference>
<dbReference type="Pfam" id="PF00679">
    <property type="entry name" value="EFG_C"/>
    <property type="match status" value="1"/>
</dbReference>
<dbReference type="Pfam" id="PF14492">
    <property type="entry name" value="EFG_III"/>
    <property type="match status" value="1"/>
</dbReference>
<dbReference type="Pfam" id="PF00009">
    <property type="entry name" value="GTP_EFTU"/>
    <property type="match status" value="1"/>
</dbReference>
<dbReference type="Pfam" id="PF03144">
    <property type="entry name" value="GTP_EFTU_D2"/>
    <property type="match status" value="1"/>
</dbReference>
<dbReference type="Pfam" id="PF06421">
    <property type="entry name" value="LepA_C"/>
    <property type="match status" value="1"/>
</dbReference>
<dbReference type="PRINTS" id="PR00315">
    <property type="entry name" value="ELONGATNFCT"/>
</dbReference>
<dbReference type="SMART" id="SM00838">
    <property type="entry name" value="EFG_C"/>
    <property type="match status" value="1"/>
</dbReference>
<dbReference type="SUPFAM" id="SSF54980">
    <property type="entry name" value="EF-G C-terminal domain-like"/>
    <property type="match status" value="2"/>
</dbReference>
<dbReference type="SUPFAM" id="SSF52540">
    <property type="entry name" value="P-loop containing nucleoside triphosphate hydrolases"/>
    <property type="match status" value="1"/>
</dbReference>
<dbReference type="SUPFAM" id="SSF50447">
    <property type="entry name" value="Translation proteins"/>
    <property type="match status" value="1"/>
</dbReference>
<dbReference type="PROSITE" id="PS00301">
    <property type="entry name" value="G_TR_1"/>
    <property type="match status" value="1"/>
</dbReference>
<dbReference type="PROSITE" id="PS51722">
    <property type="entry name" value="G_TR_2"/>
    <property type="match status" value="1"/>
</dbReference>